<feature type="chain" id="PRO_0000237713" description="2-C-methyl-D-erythritol 2,4-cyclodiphosphate synthase">
    <location>
        <begin position="1"/>
        <end position="163"/>
    </location>
</feature>
<feature type="binding site" evidence="1">
    <location>
        <begin position="10"/>
        <end position="12"/>
    </location>
    <ligand>
        <name>4-CDP-2-C-methyl-D-erythritol 2-phosphate</name>
        <dbReference type="ChEBI" id="CHEBI:57919"/>
    </ligand>
</feature>
<feature type="binding site" evidence="1">
    <location>
        <position position="10"/>
    </location>
    <ligand>
        <name>a divalent metal cation</name>
        <dbReference type="ChEBI" id="CHEBI:60240"/>
    </ligand>
</feature>
<feature type="binding site" evidence="1">
    <location>
        <position position="12"/>
    </location>
    <ligand>
        <name>a divalent metal cation</name>
        <dbReference type="ChEBI" id="CHEBI:60240"/>
    </ligand>
</feature>
<feature type="binding site" evidence="1">
    <location>
        <begin position="36"/>
        <end position="37"/>
    </location>
    <ligand>
        <name>4-CDP-2-C-methyl-D-erythritol 2-phosphate</name>
        <dbReference type="ChEBI" id="CHEBI:57919"/>
    </ligand>
</feature>
<feature type="binding site" evidence="1">
    <location>
        <position position="44"/>
    </location>
    <ligand>
        <name>a divalent metal cation</name>
        <dbReference type="ChEBI" id="CHEBI:60240"/>
    </ligand>
</feature>
<feature type="binding site" evidence="1">
    <location>
        <begin position="58"/>
        <end position="60"/>
    </location>
    <ligand>
        <name>4-CDP-2-C-methyl-D-erythritol 2-phosphate</name>
        <dbReference type="ChEBI" id="CHEBI:57919"/>
    </ligand>
</feature>
<feature type="binding site" evidence="1">
    <location>
        <begin position="63"/>
        <end position="67"/>
    </location>
    <ligand>
        <name>4-CDP-2-C-methyl-D-erythritol 2-phosphate</name>
        <dbReference type="ChEBI" id="CHEBI:57919"/>
    </ligand>
</feature>
<feature type="binding site" evidence="1">
    <location>
        <begin position="134"/>
        <end position="137"/>
    </location>
    <ligand>
        <name>4-CDP-2-C-methyl-D-erythritol 2-phosphate</name>
        <dbReference type="ChEBI" id="CHEBI:57919"/>
    </ligand>
</feature>
<feature type="binding site" evidence="1">
    <location>
        <position position="141"/>
    </location>
    <ligand>
        <name>4-CDP-2-C-methyl-D-erythritol 2-phosphate</name>
        <dbReference type="ChEBI" id="CHEBI:57919"/>
    </ligand>
</feature>
<feature type="binding site" evidence="1">
    <location>
        <position position="144"/>
    </location>
    <ligand>
        <name>4-CDP-2-C-methyl-D-erythritol 2-phosphate</name>
        <dbReference type="ChEBI" id="CHEBI:57919"/>
    </ligand>
</feature>
<feature type="site" description="Transition state stabilizer" evidence="1">
    <location>
        <position position="36"/>
    </location>
</feature>
<feature type="site" description="Transition state stabilizer" evidence="1">
    <location>
        <position position="135"/>
    </location>
</feature>
<proteinExistence type="inferred from homology"/>
<keyword id="KW-0414">Isoprene biosynthesis</keyword>
<keyword id="KW-0456">Lyase</keyword>
<keyword id="KW-0479">Metal-binding</keyword>
<keyword id="KW-1185">Reference proteome</keyword>
<gene>
    <name evidence="1" type="primary">ispF</name>
    <name type="ordered locus">CHY_2341</name>
</gene>
<reference key="1">
    <citation type="journal article" date="2005" name="PLoS Genet.">
        <title>Life in hot carbon monoxide: the complete genome sequence of Carboxydothermus hydrogenoformans Z-2901.</title>
        <authorList>
            <person name="Wu M."/>
            <person name="Ren Q."/>
            <person name="Durkin A.S."/>
            <person name="Daugherty S.C."/>
            <person name="Brinkac L.M."/>
            <person name="Dodson R.J."/>
            <person name="Madupu R."/>
            <person name="Sullivan S.A."/>
            <person name="Kolonay J.F."/>
            <person name="Nelson W.C."/>
            <person name="Tallon L.J."/>
            <person name="Jones K.M."/>
            <person name="Ulrich L.E."/>
            <person name="Gonzalez J.M."/>
            <person name="Zhulin I.B."/>
            <person name="Robb F.T."/>
            <person name="Eisen J.A."/>
        </authorList>
    </citation>
    <scope>NUCLEOTIDE SEQUENCE [LARGE SCALE GENOMIC DNA]</scope>
    <source>
        <strain>ATCC BAA-161 / DSM 6008 / Z-2901</strain>
    </source>
</reference>
<sequence length="163" mass="17856">MMIRIGFGYDVHPLVEGRKLIIGGVEIPFTKGLLGHSDADVLYHAIADAFLGSLALGDIGQLFPDNDERYRGIDSGLLLQEVYRRVRERGYCLNNLDAVIVAQKPKLLPFIQKMRENLAVLLNTAIENISVKATTTEGLGFAGREEGIAAYAVITVKEVLENG</sequence>
<accession>Q3A9N8</accession>
<name>ISPF_CARHZ</name>
<comment type="function">
    <text evidence="1">Involved in the biosynthesis of isopentenyl diphosphate (IPP) and dimethylallyl diphosphate (DMAPP), two major building blocks of isoprenoid compounds. Catalyzes the conversion of 4-diphosphocytidyl-2-C-methyl-D-erythritol 2-phosphate (CDP-ME2P) to 2-C-methyl-D-erythritol 2,4-cyclodiphosphate (ME-CPP) with a corresponding release of cytidine 5-monophosphate (CMP).</text>
</comment>
<comment type="catalytic activity">
    <reaction evidence="1">
        <text>4-CDP-2-C-methyl-D-erythritol 2-phosphate = 2-C-methyl-D-erythritol 2,4-cyclic diphosphate + CMP</text>
        <dbReference type="Rhea" id="RHEA:23864"/>
        <dbReference type="ChEBI" id="CHEBI:57919"/>
        <dbReference type="ChEBI" id="CHEBI:58483"/>
        <dbReference type="ChEBI" id="CHEBI:60377"/>
        <dbReference type="EC" id="4.6.1.12"/>
    </reaction>
</comment>
<comment type="cofactor">
    <cofactor evidence="1">
        <name>a divalent metal cation</name>
        <dbReference type="ChEBI" id="CHEBI:60240"/>
    </cofactor>
    <text evidence="1">Binds 1 divalent metal cation per subunit.</text>
</comment>
<comment type="pathway">
    <text evidence="1">Isoprenoid biosynthesis; isopentenyl diphosphate biosynthesis via DXP pathway; isopentenyl diphosphate from 1-deoxy-D-xylulose 5-phosphate: step 4/6.</text>
</comment>
<comment type="subunit">
    <text evidence="1">Homotrimer.</text>
</comment>
<comment type="similarity">
    <text evidence="1">Belongs to the IspF family.</text>
</comment>
<protein>
    <recommendedName>
        <fullName evidence="1">2-C-methyl-D-erythritol 2,4-cyclodiphosphate synthase</fullName>
        <shortName evidence="1">MECDP-synthase</shortName>
        <shortName evidence="1">MECPP-synthase</shortName>
        <shortName evidence="1">MECPS</shortName>
        <ecNumber evidence="1">4.6.1.12</ecNumber>
    </recommendedName>
</protein>
<organism>
    <name type="scientific">Carboxydothermus hydrogenoformans (strain ATCC BAA-161 / DSM 6008 / Z-2901)</name>
    <dbReference type="NCBI Taxonomy" id="246194"/>
    <lineage>
        <taxon>Bacteria</taxon>
        <taxon>Bacillati</taxon>
        <taxon>Bacillota</taxon>
        <taxon>Clostridia</taxon>
        <taxon>Thermoanaerobacterales</taxon>
        <taxon>Thermoanaerobacteraceae</taxon>
        <taxon>Carboxydothermus</taxon>
    </lineage>
</organism>
<dbReference type="EC" id="4.6.1.12" evidence="1"/>
<dbReference type="EMBL" id="CP000141">
    <property type="protein sequence ID" value="ABB15690.1"/>
    <property type="molecule type" value="Genomic_DNA"/>
</dbReference>
<dbReference type="RefSeq" id="WP_011345219.1">
    <property type="nucleotide sequence ID" value="NC_007503.1"/>
</dbReference>
<dbReference type="SMR" id="Q3A9N8"/>
<dbReference type="FunCoup" id="Q3A9N8">
    <property type="interactions" value="360"/>
</dbReference>
<dbReference type="STRING" id="246194.CHY_2341"/>
<dbReference type="KEGG" id="chy:CHY_2341"/>
<dbReference type="eggNOG" id="COG0245">
    <property type="taxonomic scope" value="Bacteria"/>
</dbReference>
<dbReference type="HOGENOM" id="CLU_084630_2_0_9"/>
<dbReference type="InParanoid" id="Q3A9N8"/>
<dbReference type="UniPathway" id="UPA00056">
    <property type="reaction ID" value="UER00095"/>
</dbReference>
<dbReference type="Proteomes" id="UP000002706">
    <property type="component" value="Chromosome"/>
</dbReference>
<dbReference type="GO" id="GO:0008685">
    <property type="term" value="F:2-C-methyl-D-erythritol 2,4-cyclodiphosphate synthase activity"/>
    <property type="evidence" value="ECO:0007669"/>
    <property type="project" value="UniProtKB-UniRule"/>
</dbReference>
<dbReference type="GO" id="GO:0046872">
    <property type="term" value="F:metal ion binding"/>
    <property type="evidence" value="ECO:0007669"/>
    <property type="project" value="UniProtKB-KW"/>
</dbReference>
<dbReference type="GO" id="GO:0019288">
    <property type="term" value="P:isopentenyl diphosphate biosynthetic process, methylerythritol 4-phosphate pathway"/>
    <property type="evidence" value="ECO:0007669"/>
    <property type="project" value="UniProtKB-UniRule"/>
</dbReference>
<dbReference type="GO" id="GO:0016114">
    <property type="term" value="P:terpenoid biosynthetic process"/>
    <property type="evidence" value="ECO:0007669"/>
    <property type="project" value="InterPro"/>
</dbReference>
<dbReference type="CDD" id="cd00554">
    <property type="entry name" value="MECDP_synthase"/>
    <property type="match status" value="1"/>
</dbReference>
<dbReference type="FunFam" id="3.30.1330.50:FF:000001">
    <property type="entry name" value="2-C-methyl-D-erythritol 2,4-cyclodiphosphate synthase"/>
    <property type="match status" value="1"/>
</dbReference>
<dbReference type="Gene3D" id="3.30.1330.50">
    <property type="entry name" value="2-C-methyl-D-erythritol 2,4-cyclodiphosphate synthase"/>
    <property type="match status" value="1"/>
</dbReference>
<dbReference type="HAMAP" id="MF_00107">
    <property type="entry name" value="IspF"/>
    <property type="match status" value="1"/>
</dbReference>
<dbReference type="InterPro" id="IPR003526">
    <property type="entry name" value="MECDP_synthase"/>
</dbReference>
<dbReference type="InterPro" id="IPR020555">
    <property type="entry name" value="MECDP_synthase_CS"/>
</dbReference>
<dbReference type="InterPro" id="IPR036571">
    <property type="entry name" value="MECDP_synthase_sf"/>
</dbReference>
<dbReference type="NCBIfam" id="TIGR00151">
    <property type="entry name" value="ispF"/>
    <property type="match status" value="1"/>
</dbReference>
<dbReference type="PANTHER" id="PTHR43181">
    <property type="entry name" value="2-C-METHYL-D-ERYTHRITOL 2,4-CYCLODIPHOSPHATE SYNTHASE, CHLOROPLASTIC"/>
    <property type="match status" value="1"/>
</dbReference>
<dbReference type="PANTHER" id="PTHR43181:SF1">
    <property type="entry name" value="2-C-METHYL-D-ERYTHRITOL 2,4-CYCLODIPHOSPHATE SYNTHASE, CHLOROPLASTIC"/>
    <property type="match status" value="1"/>
</dbReference>
<dbReference type="Pfam" id="PF02542">
    <property type="entry name" value="YgbB"/>
    <property type="match status" value="1"/>
</dbReference>
<dbReference type="SUPFAM" id="SSF69765">
    <property type="entry name" value="IpsF-like"/>
    <property type="match status" value="1"/>
</dbReference>
<dbReference type="PROSITE" id="PS01350">
    <property type="entry name" value="ISPF"/>
    <property type="match status" value="1"/>
</dbReference>
<evidence type="ECO:0000255" key="1">
    <source>
        <dbReference type="HAMAP-Rule" id="MF_00107"/>
    </source>
</evidence>